<comment type="function">
    <text>This protein is a repressor of division inhibition gene dicB.</text>
</comment>
<gene>
    <name type="primary">dicA</name>
    <name type="ordered locus">b1570</name>
    <name type="ordered locus">JW1562</name>
</gene>
<evidence type="ECO:0000255" key="1">
    <source>
        <dbReference type="PROSITE-ProRule" id="PRU00257"/>
    </source>
</evidence>
<reference key="1">
    <citation type="journal article" date="1986" name="Nucleic Acids Res.">
        <title>Control of cell division in Escherichia coli. DNA sequence of dicA and of a second gene complementing mutation dicA1, dicC.</title>
        <authorList>
            <person name="Bejar S."/>
            <person name="Cam K."/>
            <person name="Bouche J.-P."/>
        </authorList>
    </citation>
    <scope>NUCLEOTIDE SEQUENCE [GENOMIC DNA]</scope>
</reference>
<reference key="2">
    <citation type="journal article" date="1996" name="DNA Res.">
        <title>A 570-kb DNA sequence of the Escherichia coli K-12 genome corresponding to the 28.0-40.1 min region on the linkage map.</title>
        <authorList>
            <person name="Aiba H."/>
            <person name="Baba T."/>
            <person name="Fujita K."/>
            <person name="Hayashi K."/>
            <person name="Inada T."/>
            <person name="Isono K."/>
            <person name="Itoh T."/>
            <person name="Kasai H."/>
            <person name="Kashimoto K."/>
            <person name="Kimura S."/>
            <person name="Kitakawa M."/>
            <person name="Kitagawa M."/>
            <person name="Makino K."/>
            <person name="Miki T."/>
            <person name="Mizobuchi K."/>
            <person name="Mori H."/>
            <person name="Mori T."/>
            <person name="Motomura K."/>
            <person name="Nakade S."/>
            <person name="Nakamura Y."/>
            <person name="Nashimoto H."/>
            <person name="Nishio Y."/>
            <person name="Oshima T."/>
            <person name="Saito N."/>
            <person name="Sampei G."/>
            <person name="Seki Y."/>
            <person name="Sivasundaram S."/>
            <person name="Tagami H."/>
            <person name="Takeda J."/>
            <person name="Takemoto K."/>
            <person name="Takeuchi Y."/>
            <person name="Wada C."/>
            <person name="Yamamoto Y."/>
            <person name="Horiuchi T."/>
        </authorList>
    </citation>
    <scope>NUCLEOTIDE SEQUENCE [LARGE SCALE GENOMIC DNA]</scope>
    <source>
        <strain>K12 / W3110 / ATCC 27325 / DSM 5911</strain>
    </source>
</reference>
<reference key="3">
    <citation type="journal article" date="1997" name="Science">
        <title>The complete genome sequence of Escherichia coli K-12.</title>
        <authorList>
            <person name="Blattner F.R."/>
            <person name="Plunkett G. III"/>
            <person name="Bloch C.A."/>
            <person name="Perna N.T."/>
            <person name="Burland V."/>
            <person name="Riley M."/>
            <person name="Collado-Vides J."/>
            <person name="Glasner J.D."/>
            <person name="Rode C.K."/>
            <person name="Mayhew G.F."/>
            <person name="Gregor J."/>
            <person name="Davis N.W."/>
            <person name="Kirkpatrick H.A."/>
            <person name="Goeden M.A."/>
            <person name="Rose D.J."/>
            <person name="Mau B."/>
            <person name="Shao Y."/>
        </authorList>
    </citation>
    <scope>NUCLEOTIDE SEQUENCE [LARGE SCALE GENOMIC DNA]</scope>
    <source>
        <strain>K12 / MG1655 / ATCC 47076</strain>
    </source>
</reference>
<reference key="4">
    <citation type="journal article" date="2006" name="Mol. Syst. Biol.">
        <title>Highly accurate genome sequences of Escherichia coli K-12 strains MG1655 and W3110.</title>
        <authorList>
            <person name="Hayashi K."/>
            <person name="Morooka N."/>
            <person name="Yamamoto Y."/>
            <person name="Fujita K."/>
            <person name="Isono K."/>
            <person name="Choi S."/>
            <person name="Ohtsubo E."/>
            <person name="Baba T."/>
            <person name="Wanner B.L."/>
            <person name="Mori H."/>
            <person name="Horiuchi T."/>
        </authorList>
    </citation>
    <scope>NUCLEOTIDE SEQUENCE [LARGE SCALE GENOMIC DNA]</scope>
    <source>
        <strain>K12 / W3110 / ATCC 27325 / DSM 5911</strain>
    </source>
</reference>
<reference key="5">
    <citation type="journal article" date="1988" name="Mol. Gen. Genet.">
        <title>Cell division inhibition gene dicB is regulated by a locus similar to lambdoid bacteriophage immunity loci.</title>
        <authorList>
            <person name="Bejar S."/>
            <person name="Bouche F."/>
            <person name="Bouche J.-P."/>
        </authorList>
    </citation>
    <scope>NUCLEOTIDE SEQUENCE [GENOMIC DNA] OF 1-79</scope>
</reference>
<keyword id="KW-0131">Cell cycle</keyword>
<keyword id="KW-0132">Cell division</keyword>
<keyword id="KW-0238">DNA-binding</keyword>
<keyword id="KW-1185">Reference proteome</keyword>
<keyword id="KW-0678">Repressor</keyword>
<keyword id="KW-0804">Transcription</keyword>
<keyword id="KW-0805">Transcription regulation</keyword>
<proteinExistence type="predicted"/>
<protein>
    <recommendedName>
        <fullName>HTH-type transcriptional regulator DicA</fullName>
    </recommendedName>
    <alternativeName>
        <fullName>Repressor protein of division inhibition gene dicA</fullName>
    </alternativeName>
</protein>
<name>DICA_ECOLI</name>
<accession>P06966</accession>
<organism>
    <name type="scientific">Escherichia coli (strain K12)</name>
    <dbReference type="NCBI Taxonomy" id="83333"/>
    <lineage>
        <taxon>Bacteria</taxon>
        <taxon>Pseudomonadati</taxon>
        <taxon>Pseudomonadota</taxon>
        <taxon>Gammaproteobacteria</taxon>
        <taxon>Enterobacterales</taxon>
        <taxon>Enterobacteriaceae</taxon>
        <taxon>Escherichia</taxon>
    </lineage>
</organism>
<dbReference type="EMBL" id="X07465">
    <property type="protein sequence ID" value="CAA30349.1"/>
    <property type="molecule type" value="Genomic_DNA"/>
</dbReference>
<dbReference type="EMBL" id="U00096">
    <property type="protein sequence ID" value="AAC74643.1"/>
    <property type="molecule type" value="Genomic_DNA"/>
</dbReference>
<dbReference type="EMBL" id="AP009048">
    <property type="protein sequence ID" value="BAA15275.1"/>
    <property type="molecule type" value="Genomic_DNA"/>
</dbReference>
<dbReference type="PIR" id="S05260">
    <property type="entry name" value="BVECDA"/>
</dbReference>
<dbReference type="RefSeq" id="NP_416088.1">
    <property type="nucleotide sequence ID" value="NC_000913.3"/>
</dbReference>
<dbReference type="RefSeq" id="WP_000448564.1">
    <property type="nucleotide sequence ID" value="NZ_LN832404.1"/>
</dbReference>
<dbReference type="SMR" id="P06966"/>
<dbReference type="BioGRID" id="4263290">
    <property type="interactions" value="102"/>
</dbReference>
<dbReference type="FunCoup" id="P06966">
    <property type="interactions" value="14"/>
</dbReference>
<dbReference type="IntAct" id="P06966">
    <property type="interactions" value="5"/>
</dbReference>
<dbReference type="STRING" id="511145.b1570"/>
<dbReference type="jPOST" id="P06966"/>
<dbReference type="PaxDb" id="511145-b1570"/>
<dbReference type="EnsemblBacteria" id="AAC74643">
    <property type="protein sequence ID" value="AAC74643"/>
    <property type="gene ID" value="b1570"/>
</dbReference>
<dbReference type="GeneID" id="946241"/>
<dbReference type="KEGG" id="ecj:JW1562"/>
<dbReference type="KEGG" id="eco:b1570"/>
<dbReference type="KEGG" id="ecoc:C3026_09050"/>
<dbReference type="PATRIC" id="fig|1411691.4.peg.693"/>
<dbReference type="EchoBASE" id="EB0222"/>
<dbReference type="eggNOG" id="COG1396">
    <property type="taxonomic scope" value="Bacteria"/>
</dbReference>
<dbReference type="HOGENOM" id="CLU_066192_4_4_6"/>
<dbReference type="InParanoid" id="P06966"/>
<dbReference type="OMA" id="TISQWET"/>
<dbReference type="OrthoDB" id="9791537at2"/>
<dbReference type="PhylomeDB" id="P06966"/>
<dbReference type="BioCyc" id="EcoCyc:EG10226-MONOMER"/>
<dbReference type="PRO" id="PR:P06966"/>
<dbReference type="Proteomes" id="UP000000625">
    <property type="component" value="Chromosome"/>
</dbReference>
<dbReference type="GO" id="GO:0003677">
    <property type="term" value="F:DNA binding"/>
    <property type="evidence" value="ECO:0000314"/>
    <property type="project" value="EcoCyc"/>
</dbReference>
<dbReference type="GO" id="GO:0051301">
    <property type="term" value="P:cell division"/>
    <property type="evidence" value="ECO:0007669"/>
    <property type="project" value="UniProtKB-KW"/>
</dbReference>
<dbReference type="GO" id="GO:0006351">
    <property type="term" value="P:DNA-templated transcription"/>
    <property type="evidence" value="ECO:0000314"/>
    <property type="project" value="EcoCyc"/>
</dbReference>
<dbReference type="CDD" id="cd00093">
    <property type="entry name" value="HTH_XRE"/>
    <property type="match status" value="1"/>
</dbReference>
<dbReference type="FunFam" id="1.10.260.40:FF:000052">
    <property type="entry name" value="HTH-type transcriptional regulator DicA"/>
    <property type="match status" value="1"/>
</dbReference>
<dbReference type="Gene3D" id="1.10.260.40">
    <property type="entry name" value="lambda repressor-like DNA-binding domains"/>
    <property type="match status" value="1"/>
</dbReference>
<dbReference type="InterPro" id="IPR001387">
    <property type="entry name" value="Cro/C1-type_HTH"/>
</dbReference>
<dbReference type="InterPro" id="IPR010982">
    <property type="entry name" value="Lambda_DNA-bd_dom_sf"/>
</dbReference>
<dbReference type="NCBIfam" id="NF007257">
    <property type="entry name" value="PRK09706.1"/>
    <property type="match status" value="1"/>
</dbReference>
<dbReference type="PANTHER" id="PTHR46558:SF4">
    <property type="entry name" value="DNA-BIDING PHAGE PROTEIN"/>
    <property type="match status" value="1"/>
</dbReference>
<dbReference type="PANTHER" id="PTHR46558">
    <property type="entry name" value="TRACRIPTIONAL REGULATORY PROTEIN-RELATED-RELATED"/>
    <property type="match status" value="1"/>
</dbReference>
<dbReference type="Pfam" id="PF01381">
    <property type="entry name" value="HTH_3"/>
    <property type="match status" value="1"/>
</dbReference>
<dbReference type="SMART" id="SM00530">
    <property type="entry name" value="HTH_XRE"/>
    <property type="match status" value="1"/>
</dbReference>
<dbReference type="SUPFAM" id="SSF47413">
    <property type="entry name" value="lambda repressor-like DNA-binding domains"/>
    <property type="match status" value="1"/>
</dbReference>
<dbReference type="PROSITE" id="PS50943">
    <property type="entry name" value="HTH_CROC1"/>
    <property type="match status" value="1"/>
</dbReference>
<sequence length="135" mass="15656">METKNLTIGERIRYRRKNLKHTQRSLAKALKISHVSVSQWERGDSEPTGKNLFALSKVLQCSPTWILFGDEDKQPTPPVEKPVALSPKELELLELFNALPESEQDTQLAEMRARVKNFNKLFEELLKARQRTNKR</sequence>
<feature type="chain" id="PRO_0000149725" description="HTH-type transcriptional regulator DicA">
    <location>
        <begin position="1"/>
        <end position="135"/>
    </location>
</feature>
<feature type="domain" description="HTH cro/C1-type" evidence="1">
    <location>
        <begin position="12"/>
        <end position="66"/>
    </location>
</feature>
<feature type="DNA-binding region" description="H-T-H motif" evidence="1">
    <location>
        <begin position="23"/>
        <end position="42"/>
    </location>
</feature>